<keyword id="KW-0488">Methylation</keyword>
<keyword id="KW-0687">Ribonucleoprotein</keyword>
<keyword id="KW-0689">Ribosomal protein</keyword>
<keyword id="KW-0694">RNA-binding</keyword>
<keyword id="KW-0699">rRNA-binding</keyword>
<keyword id="KW-0820">tRNA-binding</keyword>
<feature type="chain" id="PRO_1000134622" description="Small ribosomal subunit protein uS12">
    <location>
        <begin position="1"/>
        <end position="124"/>
    </location>
</feature>
<feature type="modified residue" description="3-methylthioaspartic acid" evidence="1">
    <location>
        <position position="89"/>
    </location>
</feature>
<evidence type="ECO:0000250" key="1"/>
<evidence type="ECO:0000255" key="2">
    <source>
        <dbReference type="HAMAP-Rule" id="MF_00403"/>
    </source>
</evidence>
<evidence type="ECO:0000305" key="3"/>
<proteinExistence type="inferred from homology"/>
<name>RS12_BUCAT</name>
<protein>
    <recommendedName>
        <fullName evidence="2">Small ribosomal subunit protein uS12</fullName>
    </recommendedName>
    <alternativeName>
        <fullName evidence="3">30S ribosomal protein S12</fullName>
    </alternativeName>
</protein>
<organism>
    <name type="scientific">Buchnera aphidicola subsp. Acyrthosiphon pisum (strain Tuc7)</name>
    <dbReference type="NCBI Taxonomy" id="561501"/>
    <lineage>
        <taxon>Bacteria</taxon>
        <taxon>Pseudomonadati</taxon>
        <taxon>Pseudomonadota</taxon>
        <taxon>Gammaproteobacteria</taxon>
        <taxon>Enterobacterales</taxon>
        <taxon>Erwiniaceae</taxon>
        <taxon>Buchnera</taxon>
    </lineage>
</organism>
<reference key="1">
    <citation type="journal article" date="2009" name="Science">
        <title>The dynamics and time scale of ongoing genomic erosion in symbiotic bacteria.</title>
        <authorList>
            <person name="Moran N.A."/>
            <person name="McLaughlin H.J."/>
            <person name="Sorek R."/>
        </authorList>
    </citation>
    <scope>NUCLEOTIDE SEQUENCE [LARGE SCALE GENOMIC DNA]</scope>
    <source>
        <strain>Tuc7</strain>
    </source>
</reference>
<sequence length="124" mass="13801">MATVNQLVRKPRVRKVIKSNVPALGKSPQKRGVCTRVYTTTPKKPNSALRKVCRVRLTNGFEVTAYIGGEGHNLQEHSVILIRGGRVKDLPGVRYHIVRGSLDCAGVKERKQGRSKYGVKKPKK</sequence>
<accession>B8D854</accession>
<gene>
    <name evidence="2" type="primary">rpsL</name>
    <name type="ordered locus">BUAPTUC7_523</name>
</gene>
<dbReference type="EMBL" id="CP001158">
    <property type="protein sequence ID" value="ACL30319.1"/>
    <property type="molecule type" value="Genomic_DNA"/>
</dbReference>
<dbReference type="RefSeq" id="WP_009874480.1">
    <property type="nucleotide sequence ID" value="NC_011834.1"/>
</dbReference>
<dbReference type="SMR" id="B8D854"/>
<dbReference type="KEGG" id="bau:BUAPTUC7_523"/>
<dbReference type="HOGENOM" id="CLU_104295_1_2_6"/>
<dbReference type="GO" id="GO:0015935">
    <property type="term" value="C:small ribosomal subunit"/>
    <property type="evidence" value="ECO:0007669"/>
    <property type="project" value="InterPro"/>
</dbReference>
<dbReference type="GO" id="GO:0019843">
    <property type="term" value="F:rRNA binding"/>
    <property type="evidence" value="ECO:0007669"/>
    <property type="project" value="UniProtKB-UniRule"/>
</dbReference>
<dbReference type="GO" id="GO:0003735">
    <property type="term" value="F:structural constituent of ribosome"/>
    <property type="evidence" value="ECO:0007669"/>
    <property type="project" value="InterPro"/>
</dbReference>
<dbReference type="GO" id="GO:0000049">
    <property type="term" value="F:tRNA binding"/>
    <property type="evidence" value="ECO:0007669"/>
    <property type="project" value="UniProtKB-UniRule"/>
</dbReference>
<dbReference type="GO" id="GO:0006412">
    <property type="term" value="P:translation"/>
    <property type="evidence" value="ECO:0007669"/>
    <property type="project" value="UniProtKB-UniRule"/>
</dbReference>
<dbReference type="CDD" id="cd03368">
    <property type="entry name" value="Ribosomal_S12"/>
    <property type="match status" value="1"/>
</dbReference>
<dbReference type="FunFam" id="2.40.50.140:FF:000001">
    <property type="entry name" value="30S ribosomal protein S12"/>
    <property type="match status" value="1"/>
</dbReference>
<dbReference type="Gene3D" id="2.40.50.140">
    <property type="entry name" value="Nucleic acid-binding proteins"/>
    <property type="match status" value="1"/>
</dbReference>
<dbReference type="HAMAP" id="MF_00403_B">
    <property type="entry name" value="Ribosomal_uS12_B"/>
    <property type="match status" value="1"/>
</dbReference>
<dbReference type="InterPro" id="IPR012340">
    <property type="entry name" value="NA-bd_OB-fold"/>
</dbReference>
<dbReference type="InterPro" id="IPR006032">
    <property type="entry name" value="Ribosomal_uS12"/>
</dbReference>
<dbReference type="InterPro" id="IPR005679">
    <property type="entry name" value="Ribosomal_uS12_bac"/>
</dbReference>
<dbReference type="NCBIfam" id="TIGR00981">
    <property type="entry name" value="rpsL_bact"/>
    <property type="match status" value="1"/>
</dbReference>
<dbReference type="PANTHER" id="PTHR11652">
    <property type="entry name" value="30S RIBOSOMAL PROTEIN S12 FAMILY MEMBER"/>
    <property type="match status" value="1"/>
</dbReference>
<dbReference type="Pfam" id="PF00164">
    <property type="entry name" value="Ribosom_S12_S23"/>
    <property type="match status" value="1"/>
</dbReference>
<dbReference type="PIRSF" id="PIRSF002133">
    <property type="entry name" value="Ribosomal_S12/S23"/>
    <property type="match status" value="1"/>
</dbReference>
<dbReference type="PRINTS" id="PR01034">
    <property type="entry name" value="RIBOSOMALS12"/>
</dbReference>
<dbReference type="SUPFAM" id="SSF50249">
    <property type="entry name" value="Nucleic acid-binding proteins"/>
    <property type="match status" value="1"/>
</dbReference>
<dbReference type="PROSITE" id="PS00055">
    <property type="entry name" value="RIBOSOMAL_S12"/>
    <property type="match status" value="1"/>
</dbReference>
<comment type="function">
    <text evidence="2">With S4 and S5 plays an important role in translational accuracy.</text>
</comment>
<comment type="function">
    <text evidence="2">Interacts with and stabilizes bases of the 16S rRNA that are involved in tRNA selection in the A site and with the mRNA backbone. Located at the interface of the 30S and 50S subunits, it traverses the body of the 30S subunit contacting proteins on the other side and probably holding the rRNA structure together. The combined cluster of proteins S8, S12 and S17 appears to hold together the shoulder and platform of the 30S subunit.</text>
</comment>
<comment type="subunit">
    <text evidence="2">Part of the 30S ribosomal subunit. Contacts proteins S8 and S17. May interact with IF1 in the 30S initiation complex.</text>
</comment>
<comment type="similarity">
    <text evidence="2">Belongs to the universal ribosomal protein uS12 family.</text>
</comment>